<protein>
    <recommendedName>
        <fullName evidence="1">Large ribosomal subunit protein uL23</fullName>
    </recommendedName>
    <alternativeName>
        <fullName evidence="2">50S ribosomal protein L23</fullName>
    </alternativeName>
</protein>
<sequence length="82" mass="9416">MIIKEFLTTEKAIKLIESQNTLTVIVNKEATKADIKREIEKMFNVKVDKVNTLITIRGEKKAYVKLKKEFNASDIAHRLGIL</sequence>
<name>RL23_SULTO</name>
<keyword id="KW-1185">Reference proteome</keyword>
<keyword id="KW-0687">Ribonucleoprotein</keyword>
<keyword id="KW-0689">Ribosomal protein</keyword>
<keyword id="KW-0694">RNA-binding</keyword>
<keyword id="KW-0699">rRNA-binding</keyword>
<proteinExistence type="inferred from homology"/>
<dbReference type="EMBL" id="BA000023">
    <property type="protein sequence ID" value="BAB65417.1"/>
    <property type="molecule type" value="Genomic_DNA"/>
</dbReference>
<dbReference type="RefSeq" id="WP_010978400.1">
    <property type="nucleotide sequence ID" value="NC_003106.2"/>
</dbReference>
<dbReference type="SMR" id="Q975I3"/>
<dbReference type="STRING" id="273063.STK_04275"/>
<dbReference type="KEGG" id="sto:STK_04275"/>
<dbReference type="PATRIC" id="fig|273063.9.peg.498"/>
<dbReference type="eggNOG" id="arCOG04072">
    <property type="taxonomic scope" value="Archaea"/>
</dbReference>
<dbReference type="OrthoDB" id="7751at2157"/>
<dbReference type="Proteomes" id="UP000001015">
    <property type="component" value="Chromosome"/>
</dbReference>
<dbReference type="GO" id="GO:1990904">
    <property type="term" value="C:ribonucleoprotein complex"/>
    <property type="evidence" value="ECO:0007669"/>
    <property type="project" value="UniProtKB-KW"/>
</dbReference>
<dbReference type="GO" id="GO:0005840">
    <property type="term" value="C:ribosome"/>
    <property type="evidence" value="ECO:0007669"/>
    <property type="project" value="UniProtKB-KW"/>
</dbReference>
<dbReference type="GO" id="GO:0019843">
    <property type="term" value="F:rRNA binding"/>
    <property type="evidence" value="ECO:0007669"/>
    <property type="project" value="UniProtKB-UniRule"/>
</dbReference>
<dbReference type="GO" id="GO:0003735">
    <property type="term" value="F:structural constituent of ribosome"/>
    <property type="evidence" value="ECO:0007669"/>
    <property type="project" value="InterPro"/>
</dbReference>
<dbReference type="GO" id="GO:0006412">
    <property type="term" value="P:translation"/>
    <property type="evidence" value="ECO:0007669"/>
    <property type="project" value="UniProtKB-UniRule"/>
</dbReference>
<dbReference type="FunFam" id="3.30.70.330:FF:000532">
    <property type="entry name" value="50S ribosomal protein L23"/>
    <property type="match status" value="1"/>
</dbReference>
<dbReference type="Gene3D" id="3.30.70.330">
    <property type="match status" value="1"/>
</dbReference>
<dbReference type="HAMAP" id="MF_01369_A">
    <property type="entry name" value="Ribosomal_uL23_A"/>
    <property type="match status" value="1"/>
</dbReference>
<dbReference type="InterPro" id="IPR012677">
    <property type="entry name" value="Nucleotide-bd_a/b_plait_sf"/>
</dbReference>
<dbReference type="InterPro" id="IPR019985">
    <property type="entry name" value="Ribosomal_uL23"/>
</dbReference>
<dbReference type="InterPro" id="IPR013025">
    <property type="entry name" value="Ribosomal_uL23-like"/>
</dbReference>
<dbReference type="InterPro" id="IPR012678">
    <property type="entry name" value="Ribosomal_uL23/eL15/eS24_sf"/>
</dbReference>
<dbReference type="InterPro" id="IPR001014">
    <property type="entry name" value="Ribosomal_uL23_CS"/>
</dbReference>
<dbReference type="NCBIfam" id="NF011118">
    <property type="entry name" value="PRK14548.1"/>
    <property type="match status" value="1"/>
</dbReference>
<dbReference type="NCBIfam" id="TIGR03636">
    <property type="entry name" value="uL23_arch"/>
    <property type="match status" value="1"/>
</dbReference>
<dbReference type="PANTHER" id="PTHR11620">
    <property type="entry name" value="60S RIBOSOMAL PROTEIN L23A"/>
    <property type="match status" value="1"/>
</dbReference>
<dbReference type="Pfam" id="PF00276">
    <property type="entry name" value="Ribosomal_L23"/>
    <property type="match status" value="1"/>
</dbReference>
<dbReference type="SUPFAM" id="SSF54189">
    <property type="entry name" value="Ribosomal proteins S24e, L23 and L15e"/>
    <property type="match status" value="1"/>
</dbReference>
<dbReference type="PROSITE" id="PS00050">
    <property type="entry name" value="RIBOSOMAL_L23"/>
    <property type="match status" value="1"/>
</dbReference>
<evidence type="ECO:0000255" key="1">
    <source>
        <dbReference type="HAMAP-Rule" id="MF_01369"/>
    </source>
</evidence>
<evidence type="ECO:0000305" key="2"/>
<comment type="function">
    <text evidence="1">Binds to 23S rRNA. One of the proteins that surrounds the polypeptide exit tunnel on the outside of the ribosome.</text>
</comment>
<comment type="subunit">
    <text evidence="1">Part of the 50S ribosomal subunit. Contacts protein L29.</text>
</comment>
<comment type="similarity">
    <text evidence="1">Belongs to the universal ribosomal protein uL23 family.</text>
</comment>
<feature type="chain" id="PRO_0000272957" description="Large ribosomal subunit protein uL23">
    <location>
        <begin position="1"/>
        <end position="82"/>
    </location>
</feature>
<reference key="1">
    <citation type="journal article" date="2001" name="DNA Res.">
        <title>Complete genome sequence of an aerobic thermoacidophilic Crenarchaeon, Sulfolobus tokodaii strain7.</title>
        <authorList>
            <person name="Kawarabayasi Y."/>
            <person name="Hino Y."/>
            <person name="Horikawa H."/>
            <person name="Jin-no K."/>
            <person name="Takahashi M."/>
            <person name="Sekine M."/>
            <person name="Baba S."/>
            <person name="Ankai A."/>
            <person name="Kosugi H."/>
            <person name="Hosoyama A."/>
            <person name="Fukui S."/>
            <person name="Nagai Y."/>
            <person name="Nishijima K."/>
            <person name="Otsuka R."/>
            <person name="Nakazawa H."/>
            <person name="Takamiya M."/>
            <person name="Kato Y."/>
            <person name="Yoshizawa T."/>
            <person name="Tanaka T."/>
            <person name="Kudoh Y."/>
            <person name="Yamazaki J."/>
            <person name="Kushida N."/>
            <person name="Oguchi A."/>
            <person name="Aoki K."/>
            <person name="Masuda S."/>
            <person name="Yanagii M."/>
            <person name="Nishimura M."/>
            <person name="Yamagishi A."/>
            <person name="Oshima T."/>
            <person name="Kikuchi H."/>
        </authorList>
    </citation>
    <scope>NUCLEOTIDE SEQUENCE [LARGE SCALE GENOMIC DNA]</scope>
    <source>
        <strain>DSM 16993 / JCM 10545 / NBRC 100140 / 7</strain>
    </source>
</reference>
<gene>
    <name evidence="1" type="primary">rpl23</name>
    <name type="ordered locus">STK_04275</name>
    <name type="ORF">STS062</name>
</gene>
<organism>
    <name type="scientific">Sulfurisphaera tokodaii (strain DSM 16993 / JCM 10545 / NBRC 100140 / 7)</name>
    <name type="common">Sulfolobus tokodaii</name>
    <dbReference type="NCBI Taxonomy" id="273063"/>
    <lineage>
        <taxon>Archaea</taxon>
        <taxon>Thermoproteota</taxon>
        <taxon>Thermoprotei</taxon>
        <taxon>Sulfolobales</taxon>
        <taxon>Sulfolobaceae</taxon>
        <taxon>Sulfurisphaera</taxon>
    </lineage>
</organism>
<accession>Q975I3</accession>